<organism>
    <name type="scientific">Oryza sativa subsp. japonica</name>
    <name type="common">Rice</name>
    <dbReference type="NCBI Taxonomy" id="39947"/>
    <lineage>
        <taxon>Eukaryota</taxon>
        <taxon>Viridiplantae</taxon>
        <taxon>Streptophyta</taxon>
        <taxon>Embryophyta</taxon>
        <taxon>Tracheophyta</taxon>
        <taxon>Spermatophyta</taxon>
        <taxon>Magnoliopsida</taxon>
        <taxon>Liliopsida</taxon>
        <taxon>Poales</taxon>
        <taxon>Poaceae</taxon>
        <taxon>BOP clade</taxon>
        <taxon>Oryzoideae</taxon>
        <taxon>Oryzeae</taxon>
        <taxon>Oryzinae</taxon>
        <taxon>Oryza</taxon>
        <taxon>Oryza sativa</taxon>
    </lineage>
</organism>
<proteinExistence type="evidence at protein level"/>
<protein>
    <recommendedName>
        <fullName>Non-specific lipid transfer protein-like 1</fullName>
        <shortName>OsLTPL1</shortName>
    </recommendedName>
</protein>
<sequence>MAVAARAAAVACLLVVGLAAVAGVDGATASSPAPAPAVDCTAEALKLADCLDYVTPGKTAPSRPSKLCCGEVKGALKDSAAVGCLCAAFTSKTLPLPINITRALHLPAACGADASAFSKCLAPAPSPSVAPGTSSGSGGAAAAPAKGAAAARSPMASTTAVLVVAAAVAAPLLAFFHF</sequence>
<evidence type="ECO:0000255" key="1"/>
<evidence type="ECO:0000269" key="2">
    <source>
    </source>
</evidence>
<evidence type="ECO:0000305" key="3"/>
<accession>Q6ASY2</accession>
<accession>A0A0P0VYZ1</accession>
<reference key="1">
    <citation type="journal article" date="2004" name="Plant Cell Physiol.">
        <title>Isolation and identification of glycosylphosphatidylinositol-anchored arabinogalactan proteins and novel beta-glucosyl Yariv-reactive proteins from seeds of rice (Oryza sativa).</title>
        <authorList>
            <person name="Mashiguchi K."/>
            <person name="Yamaguchi I."/>
            <person name="Suzuki Y."/>
        </authorList>
    </citation>
    <scope>NUCLEOTIDE SEQUENCE [MRNA]</scope>
    <scope>PROTEIN SEQUENCE OF 27-38 AND 120-134</scope>
    <scope>TISSUE SPECIFICITY</scope>
    <source>
        <strain>cv. Koshihikari</strain>
        <tissue>Aleurone</tissue>
    </source>
</reference>
<reference key="2">
    <citation type="journal article" date="2005" name="Genome Res.">
        <title>Sequence, annotation, and analysis of synteny between rice chromosome 3 and diverged grass species.</title>
        <authorList>
            <consortium name="The rice chromosome 3 sequencing consortium"/>
            <person name="Buell C.R."/>
            <person name="Yuan Q."/>
            <person name="Ouyang S."/>
            <person name="Liu J."/>
            <person name="Zhu W."/>
            <person name="Wang A."/>
            <person name="Maiti R."/>
            <person name="Haas B."/>
            <person name="Wortman J."/>
            <person name="Pertea M."/>
            <person name="Jones K.M."/>
            <person name="Kim M."/>
            <person name="Overton L."/>
            <person name="Tsitrin T."/>
            <person name="Fadrosh D."/>
            <person name="Bera J."/>
            <person name="Weaver B."/>
            <person name="Jin S."/>
            <person name="Johri S."/>
            <person name="Reardon M."/>
            <person name="Webb K."/>
            <person name="Hill J."/>
            <person name="Moffat K."/>
            <person name="Tallon L."/>
            <person name="Van Aken S."/>
            <person name="Lewis M."/>
            <person name="Utterback T."/>
            <person name="Feldblyum T."/>
            <person name="Zismann V."/>
            <person name="Iobst S."/>
            <person name="Hsiao J."/>
            <person name="de Vazeille A.R."/>
            <person name="Salzberg S.L."/>
            <person name="White O."/>
            <person name="Fraser C.M."/>
            <person name="Yu Y."/>
            <person name="Kim H."/>
            <person name="Rambo T."/>
            <person name="Currie J."/>
            <person name="Collura K."/>
            <person name="Kernodle-Thompson S."/>
            <person name="Wei F."/>
            <person name="Kudrna K."/>
            <person name="Ammiraju J.S.S."/>
            <person name="Luo M."/>
            <person name="Goicoechea J.L."/>
            <person name="Wing R.A."/>
            <person name="Henry D."/>
            <person name="Oates R."/>
            <person name="Palmer M."/>
            <person name="Pries G."/>
            <person name="Saski C."/>
            <person name="Simmons J."/>
            <person name="Soderlund C."/>
            <person name="Nelson W."/>
            <person name="de la Bastide M."/>
            <person name="Spiegel L."/>
            <person name="Nascimento L."/>
            <person name="Huang E."/>
            <person name="Preston R."/>
            <person name="Zutavern T."/>
            <person name="Palmer L."/>
            <person name="O'Shaughnessy A."/>
            <person name="Dike S."/>
            <person name="McCombie W.R."/>
            <person name="Minx P."/>
            <person name="Cordum H."/>
            <person name="Wilson R."/>
            <person name="Jin W."/>
            <person name="Lee H.R."/>
            <person name="Jiang J."/>
            <person name="Jackson S."/>
        </authorList>
    </citation>
    <scope>NUCLEOTIDE SEQUENCE [LARGE SCALE GENOMIC DNA]</scope>
    <source>
        <strain>cv. Nipponbare</strain>
    </source>
</reference>
<reference key="3">
    <citation type="journal article" date="2005" name="Nature">
        <title>The map-based sequence of the rice genome.</title>
        <authorList>
            <consortium name="International rice genome sequencing project (IRGSP)"/>
        </authorList>
    </citation>
    <scope>NUCLEOTIDE SEQUENCE [LARGE SCALE GENOMIC DNA]</scope>
    <source>
        <strain>cv. Nipponbare</strain>
    </source>
</reference>
<reference key="4">
    <citation type="journal article" date="2008" name="Nucleic Acids Res.">
        <title>The rice annotation project database (RAP-DB): 2008 update.</title>
        <authorList>
            <consortium name="The rice annotation project (RAP)"/>
        </authorList>
    </citation>
    <scope>GENOME REANNOTATION</scope>
    <source>
        <strain>cv. Nipponbare</strain>
    </source>
</reference>
<reference key="5">
    <citation type="journal article" date="2013" name="Rice">
        <title>Improvement of the Oryza sativa Nipponbare reference genome using next generation sequence and optical map data.</title>
        <authorList>
            <person name="Kawahara Y."/>
            <person name="de la Bastide M."/>
            <person name="Hamilton J.P."/>
            <person name="Kanamori H."/>
            <person name="McCombie W.R."/>
            <person name="Ouyang S."/>
            <person name="Schwartz D.C."/>
            <person name="Tanaka T."/>
            <person name="Wu J."/>
            <person name="Zhou S."/>
            <person name="Childs K.L."/>
            <person name="Davidson R.M."/>
            <person name="Lin H."/>
            <person name="Quesada-Ocampo L."/>
            <person name="Vaillancourt B."/>
            <person name="Sakai H."/>
            <person name="Lee S.S."/>
            <person name="Kim J."/>
            <person name="Numa H."/>
            <person name="Itoh T."/>
            <person name="Buell C.R."/>
            <person name="Matsumoto T."/>
        </authorList>
    </citation>
    <scope>GENOME REANNOTATION</scope>
    <source>
        <strain>cv. Nipponbare</strain>
    </source>
</reference>
<reference key="6">
    <citation type="journal article" date="2003" name="Science">
        <title>Collection, mapping, and annotation of over 28,000 cDNA clones from japonica rice.</title>
        <authorList>
            <consortium name="The rice full-length cDNA consortium"/>
        </authorList>
    </citation>
    <scope>NUCLEOTIDE SEQUENCE [LARGE SCALE MRNA]</scope>
    <source>
        <strain>cv. Nipponbare</strain>
    </source>
</reference>
<keyword id="KW-0903">Direct protein sequencing</keyword>
<keyword id="KW-1015">Disulfide bond</keyword>
<keyword id="KW-0325">Glycoprotein</keyword>
<keyword id="KW-0336">GPI-anchor</keyword>
<keyword id="KW-0378">Hydrolase</keyword>
<keyword id="KW-0379">Hydroxylation</keyword>
<keyword id="KW-0446">Lipid-binding</keyword>
<keyword id="KW-0449">Lipoprotein</keyword>
<keyword id="KW-0472">Membrane</keyword>
<keyword id="KW-0645">Protease</keyword>
<keyword id="KW-0654">Proteoglycan</keyword>
<keyword id="KW-1185">Reference proteome</keyword>
<keyword id="KW-0732">Signal</keyword>
<keyword id="KW-0926">Vacuole</keyword>
<comment type="subcellular location">
    <subcellularLocation>
        <location evidence="3">Vacuole</location>
        <location evidence="3">Aleurone grain membrane</location>
        <topology evidence="3">Lipid-anchor</topology>
        <topology evidence="3">GPI-anchor</topology>
    </subcellularLocation>
</comment>
<comment type="tissue specificity">
    <text evidence="2">Expressed in roots, stems, leaves, flowers and seeds.</text>
</comment>
<comment type="PTM">
    <text evidence="3">O-glycosylated on hydroxyprolines; noncontiguous hydroxylproline residues are glycosylated with arabinogalactan.</text>
</comment>
<comment type="similarity">
    <text evidence="3">Belongs to the plant LTP family.</text>
</comment>
<gene>
    <name type="primary">LTPL1</name>
    <name type="ordered locus">Os03g0385400</name>
    <name type="ordered locus">LOC_Os03g26820</name>
    <name type="ORF">B1246D11.7</name>
</gene>
<name>NLTL1_ORYSJ</name>
<dbReference type="EMBL" id="EU282465">
    <property type="protein sequence ID" value="ABX83037.1"/>
    <property type="molecule type" value="mRNA"/>
</dbReference>
<dbReference type="EMBL" id="AC146521">
    <property type="protein sequence ID" value="AAT85306.1"/>
    <property type="molecule type" value="Genomic_DNA"/>
</dbReference>
<dbReference type="EMBL" id="DP000009">
    <property type="protein sequence ID" value="ABF96304.1"/>
    <property type="molecule type" value="Genomic_DNA"/>
</dbReference>
<dbReference type="EMBL" id="AP008209">
    <property type="protein sequence ID" value="BAF12166.1"/>
    <property type="molecule type" value="Genomic_DNA"/>
</dbReference>
<dbReference type="EMBL" id="AP014959">
    <property type="protein sequence ID" value="BAS84470.1"/>
    <property type="molecule type" value="Genomic_DNA"/>
</dbReference>
<dbReference type="EMBL" id="AK068223">
    <property type="protein sequence ID" value="BAG90809.1"/>
    <property type="molecule type" value="mRNA"/>
</dbReference>
<dbReference type="EMBL" id="AK070241">
    <property type="protein sequence ID" value="BAG91850.1"/>
    <property type="molecule type" value="mRNA"/>
</dbReference>
<dbReference type="RefSeq" id="XP_015633082.1">
    <property type="nucleotide sequence ID" value="XM_015777596.1"/>
</dbReference>
<dbReference type="FunCoup" id="Q6ASY2">
    <property type="interactions" value="1"/>
</dbReference>
<dbReference type="STRING" id="39947.Q6ASY2"/>
<dbReference type="GlyCosmos" id="Q6ASY2">
    <property type="glycosylation" value="1 site, No reported glycans"/>
</dbReference>
<dbReference type="PaxDb" id="39947-Q6ASY2"/>
<dbReference type="EnsemblPlants" id="Os03t0385400-01">
    <property type="protein sequence ID" value="Os03t0385400-01"/>
    <property type="gene ID" value="Os03g0385400"/>
</dbReference>
<dbReference type="Gramene" id="Os03t0385400-01">
    <property type="protein sequence ID" value="Os03t0385400-01"/>
    <property type="gene ID" value="Os03g0385400"/>
</dbReference>
<dbReference type="KEGG" id="dosa:Os03g0385400"/>
<dbReference type="eggNOG" id="ENOG502R3GD">
    <property type="taxonomic scope" value="Eukaryota"/>
</dbReference>
<dbReference type="HOGENOM" id="CLU_089796_5_2_1"/>
<dbReference type="InParanoid" id="Q6ASY2"/>
<dbReference type="OMA" id="KLCCGEV"/>
<dbReference type="OrthoDB" id="659547at2759"/>
<dbReference type="Proteomes" id="UP000000763">
    <property type="component" value="Chromosome 3"/>
</dbReference>
<dbReference type="Proteomes" id="UP000059680">
    <property type="component" value="Chromosome 3"/>
</dbReference>
<dbReference type="GO" id="GO:0032578">
    <property type="term" value="C:aleurone grain membrane"/>
    <property type="evidence" value="ECO:0000314"/>
    <property type="project" value="UniProtKB"/>
</dbReference>
<dbReference type="GO" id="GO:0098552">
    <property type="term" value="C:side of membrane"/>
    <property type="evidence" value="ECO:0007669"/>
    <property type="project" value="UniProtKB-KW"/>
</dbReference>
<dbReference type="GO" id="GO:0005773">
    <property type="term" value="C:vacuole"/>
    <property type="evidence" value="ECO:0007669"/>
    <property type="project" value="UniProtKB-KW"/>
</dbReference>
<dbReference type="GO" id="GO:0008289">
    <property type="term" value="F:lipid binding"/>
    <property type="evidence" value="ECO:0007669"/>
    <property type="project" value="UniProtKB-KW"/>
</dbReference>
<dbReference type="GO" id="GO:0008233">
    <property type="term" value="F:peptidase activity"/>
    <property type="evidence" value="ECO:0007669"/>
    <property type="project" value="UniProtKB-KW"/>
</dbReference>
<dbReference type="GO" id="GO:0006508">
    <property type="term" value="P:proteolysis"/>
    <property type="evidence" value="ECO:0007669"/>
    <property type="project" value="UniProtKB-KW"/>
</dbReference>
<dbReference type="CDD" id="cd00010">
    <property type="entry name" value="AAI_LTSS"/>
    <property type="match status" value="1"/>
</dbReference>
<dbReference type="FunFam" id="1.10.110.10:FF:000009">
    <property type="entry name" value="Non-specific lipid transfer protein-like 1"/>
    <property type="match status" value="1"/>
</dbReference>
<dbReference type="Gene3D" id="1.10.110.10">
    <property type="entry name" value="Plant lipid-transfer and hydrophobic proteins"/>
    <property type="match status" value="1"/>
</dbReference>
<dbReference type="InterPro" id="IPR036312">
    <property type="entry name" value="Bifun_inhib/LTP/seed_sf"/>
</dbReference>
<dbReference type="InterPro" id="IPR016140">
    <property type="entry name" value="Bifunc_inhib/LTP/seed_store"/>
</dbReference>
<dbReference type="InterPro" id="IPR043325">
    <property type="entry name" value="LTSS"/>
</dbReference>
<dbReference type="PANTHER" id="PTHR33044">
    <property type="entry name" value="BIFUNCTIONAL INHIBITOR/LIPID-TRANSFER PROTEIN/SEED STORAGE 2S ALBUMIN SUPERFAMILY PROTEIN-RELATED"/>
    <property type="match status" value="1"/>
</dbReference>
<dbReference type="Pfam" id="PF14368">
    <property type="entry name" value="LTP_2"/>
    <property type="match status" value="1"/>
</dbReference>
<dbReference type="SUPFAM" id="SSF47699">
    <property type="entry name" value="Bifunctional inhibitor/lipid-transfer protein/seed storage 2S albumin"/>
    <property type="match status" value="1"/>
</dbReference>
<feature type="signal peptide" evidence="2">
    <location>
        <begin position="1"/>
        <end position="26"/>
    </location>
</feature>
<feature type="chain" id="PRO_0000397898" description="Non-specific lipid transfer protein-like 1">
    <location>
        <begin position="27"/>
        <end position="149"/>
    </location>
</feature>
<feature type="propeptide" id="PRO_0000397899" description="Removed in mature form" evidence="1">
    <location>
        <begin position="150"/>
        <end position="178"/>
    </location>
</feature>
<feature type="lipid moiety-binding region" description="GPI-anchor amidated alanine" evidence="1">
    <location>
        <position position="149"/>
    </location>
</feature>
<feature type="glycosylation site" description="N-linked (GlcNAc...) asparagine" evidence="1">
    <location>
        <position position="99"/>
    </location>
</feature>
<feature type="disulfide bond" evidence="1">
    <location>
        <begin position="50"/>
        <end position="68"/>
    </location>
</feature>
<feature type="disulfide bond" evidence="1">
    <location>
        <begin position="69"/>
        <end position="110"/>
    </location>
</feature>